<name>BKDR_PSEAE</name>
<protein>
    <recommendedName>
        <fullName>Bkd operon transcriptional regulator</fullName>
    </recommendedName>
</protein>
<dbReference type="EMBL" id="AE004091">
    <property type="protein sequence ID" value="AAG05634.1"/>
    <property type="molecule type" value="Genomic_DNA"/>
</dbReference>
<dbReference type="PIR" id="B83365">
    <property type="entry name" value="B83365"/>
</dbReference>
<dbReference type="RefSeq" id="NP_250936.1">
    <property type="nucleotide sequence ID" value="NC_002516.2"/>
</dbReference>
<dbReference type="RefSeq" id="WP_003089245.1">
    <property type="nucleotide sequence ID" value="NZ_QZGE01000014.1"/>
</dbReference>
<dbReference type="SMR" id="Q9I1M3"/>
<dbReference type="STRING" id="208964.PA2246"/>
<dbReference type="PaxDb" id="208964-PA2246"/>
<dbReference type="GeneID" id="879548"/>
<dbReference type="KEGG" id="pae:PA2246"/>
<dbReference type="PATRIC" id="fig|208964.12.peg.2346"/>
<dbReference type="PseudoCAP" id="PA2246"/>
<dbReference type="HOGENOM" id="CLU_091233_0_3_6"/>
<dbReference type="InParanoid" id="Q9I1M3"/>
<dbReference type="OrthoDB" id="166264at2"/>
<dbReference type="PhylomeDB" id="Q9I1M3"/>
<dbReference type="BioCyc" id="PAER208964:G1FZ6-2285-MONOMER"/>
<dbReference type="Proteomes" id="UP000002438">
    <property type="component" value="Chromosome"/>
</dbReference>
<dbReference type="GO" id="GO:0005829">
    <property type="term" value="C:cytosol"/>
    <property type="evidence" value="ECO:0000318"/>
    <property type="project" value="GO_Central"/>
</dbReference>
<dbReference type="GO" id="GO:0043565">
    <property type="term" value="F:sequence-specific DNA binding"/>
    <property type="evidence" value="ECO:0000318"/>
    <property type="project" value="GO_Central"/>
</dbReference>
<dbReference type="GO" id="GO:0043200">
    <property type="term" value="P:response to amino acid"/>
    <property type="evidence" value="ECO:0000318"/>
    <property type="project" value="GO_Central"/>
</dbReference>
<dbReference type="CDD" id="cd00090">
    <property type="entry name" value="HTH_ARSR"/>
    <property type="match status" value="1"/>
</dbReference>
<dbReference type="FunFam" id="3.30.70.920:FF:000022">
    <property type="entry name" value="ArsR family transcriptional regulator"/>
    <property type="match status" value="1"/>
</dbReference>
<dbReference type="FunFam" id="1.10.10.10:FF:000615">
    <property type="entry name" value="Transcriptional regulator, AsnC family"/>
    <property type="match status" value="1"/>
</dbReference>
<dbReference type="Gene3D" id="3.30.70.920">
    <property type="match status" value="1"/>
</dbReference>
<dbReference type="Gene3D" id="1.10.10.10">
    <property type="entry name" value="Winged helix-like DNA-binding domain superfamily/Winged helix DNA-binding domain"/>
    <property type="match status" value="1"/>
</dbReference>
<dbReference type="InterPro" id="IPR011991">
    <property type="entry name" value="ArsR-like_HTH"/>
</dbReference>
<dbReference type="InterPro" id="IPR000485">
    <property type="entry name" value="AsnC-type_HTH_dom"/>
</dbReference>
<dbReference type="InterPro" id="IPR011008">
    <property type="entry name" value="Dimeric_a/b-barrel"/>
</dbReference>
<dbReference type="InterPro" id="IPR019888">
    <property type="entry name" value="Tscrpt_reg_AsnC-like"/>
</dbReference>
<dbReference type="InterPro" id="IPR019887">
    <property type="entry name" value="Tscrpt_reg_AsnC/Lrp_C"/>
</dbReference>
<dbReference type="InterPro" id="IPR036388">
    <property type="entry name" value="WH-like_DNA-bd_sf"/>
</dbReference>
<dbReference type="InterPro" id="IPR036390">
    <property type="entry name" value="WH_DNA-bd_sf"/>
</dbReference>
<dbReference type="PANTHER" id="PTHR30154">
    <property type="entry name" value="LEUCINE-RESPONSIVE REGULATORY PROTEIN"/>
    <property type="match status" value="1"/>
</dbReference>
<dbReference type="PANTHER" id="PTHR30154:SF34">
    <property type="entry name" value="TRANSCRIPTIONAL REGULATOR AZLB"/>
    <property type="match status" value="1"/>
</dbReference>
<dbReference type="Pfam" id="PF01037">
    <property type="entry name" value="AsnC_trans_reg"/>
    <property type="match status" value="1"/>
</dbReference>
<dbReference type="Pfam" id="PF13412">
    <property type="entry name" value="HTH_24"/>
    <property type="match status" value="1"/>
</dbReference>
<dbReference type="PRINTS" id="PR00033">
    <property type="entry name" value="HTHASNC"/>
</dbReference>
<dbReference type="SMART" id="SM00344">
    <property type="entry name" value="HTH_ASNC"/>
    <property type="match status" value="1"/>
</dbReference>
<dbReference type="SUPFAM" id="SSF54909">
    <property type="entry name" value="Dimeric alpha+beta barrel"/>
    <property type="match status" value="1"/>
</dbReference>
<dbReference type="SUPFAM" id="SSF46785">
    <property type="entry name" value="Winged helix' DNA-binding domain"/>
    <property type="match status" value="1"/>
</dbReference>
<dbReference type="PROSITE" id="PS50956">
    <property type="entry name" value="HTH_ASNC_2"/>
    <property type="match status" value="1"/>
</dbReference>
<keyword id="KW-0010">Activator</keyword>
<keyword id="KW-0238">DNA-binding</keyword>
<keyword id="KW-1185">Reference proteome</keyword>
<keyword id="KW-0804">Transcription</keyword>
<keyword id="KW-0805">Transcription regulation</keyword>
<evidence type="ECO:0000250" key="1"/>
<evidence type="ECO:0000255" key="2">
    <source>
        <dbReference type="PROSITE-ProRule" id="PRU00319"/>
    </source>
</evidence>
<comment type="function">
    <text evidence="1">Positive regulator of the bkd operon for branched-chain keto acid dehydrogenase complex.</text>
</comment>
<accession>Q9I1M3</accession>
<organism>
    <name type="scientific">Pseudomonas aeruginosa (strain ATCC 15692 / DSM 22644 / CIP 104116 / JCM 14847 / LMG 12228 / 1C / PRS 101 / PAO1)</name>
    <dbReference type="NCBI Taxonomy" id="208964"/>
    <lineage>
        <taxon>Bacteria</taxon>
        <taxon>Pseudomonadati</taxon>
        <taxon>Pseudomonadota</taxon>
        <taxon>Gammaproteobacteria</taxon>
        <taxon>Pseudomonadales</taxon>
        <taxon>Pseudomonadaceae</taxon>
        <taxon>Pseudomonas</taxon>
    </lineage>
</organism>
<feature type="chain" id="PRO_0000287776" description="Bkd operon transcriptional regulator">
    <location>
        <begin position="1"/>
        <end position="153"/>
    </location>
</feature>
<feature type="domain" description="HTH asnC-type" evidence="2">
    <location>
        <begin position="4"/>
        <end position="65"/>
    </location>
</feature>
<feature type="DNA-binding region" description="H-T-H motif" evidence="2">
    <location>
        <begin position="23"/>
        <end position="42"/>
    </location>
</feature>
<proteinExistence type="inferred from homology"/>
<reference key="1">
    <citation type="journal article" date="2000" name="Nature">
        <title>Complete genome sequence of Pseudomonas aeruginosa PAO1, an opportunistic pathogen.</title>
        <authorList>
            <person name="Stover C.K."/>
            <person name="Pham X.-Q.T."/>
            <person name="Erwin A.L."/>
            <person name="Mizoguchi S.D."/>
            <person name="Warrener P."/>
            <person name="Hickey M.J."/>
            <person name="Brinkman F.S.L."/>
            <person name="Hufnagle W.O."/>
            <person name="Kowalik D.J."/>
            <person name="Lagrou M."/>
            <person name="Garber R.L."/>
            <person name="Goltry L."/>
            <person name="Tolentino E."/>
            <person name="Westbrock-Wadman S."/>
            <person name="Yuan Y."/>
            <person name="Brody L.L."/>
            <person name="Coulter S.N."/>
            <person name="Folger K.R."/>
            <person name="Kas A."/>
            <person name="Larbig K."/>
            <person name="Lim R.M."/>
            <person name="Smith K.A."/>
            <person name="Spencer D.H."/>
            <person name="Wong G.K.-S."/>
            <person name="Wu Z."/>
            <person name="Paulsen I.T."/>
            <person name="Reizer J."/>
            <person name="Saier M.H. Jr."/>
            <person name="Hancock R.E.W."/>
            <person name="Lory S."/>
            <person name="Olson M.V."/>
        </authorList>
    </citation>
    <scope>NUCLEOTIDE SEQUENCE [LARGE SCALE GENOMIC DNA]</scope>
    <source>
        <strain>ATCC 15692 / DSM 22644 / CIP 104116 / JCM 14847 / LMG 12228 / 1C / PRS 101 / PAO1</strain>
    </source>
</reference>
<sequence length="153" mass="17203">MAELDRIDLKILRALADDGRLSWRDLAQKVGLSLTPTLRRVRRLEEEHYIQGYFARLDEERLSGAMSVFVSVSLEKQTGDYLARFEERIVDAPQVMSCFQMTGDADYMLRVVVKDLAAYQAFLTNTLTCIPGVAGIKSAFALKSVMLRSAPPL</sequence>
<gene>
    <name type="primary">bkdR</name>
    <name type="ordered locus">PA2246</name>
</gene>